<name>RS17_CLOK5</name>
<reference key="1">
    <citation type="journal article" date="2008" name="Proc. Natl. Acad. Sci. U.S.A.">
        <title>The genome of Clostridium kluyveri, a strict anaerobe with unique metabolic features.</title>
        <authorList>
            <person name="Seedorf H."/>
            <person name="Fricke W.F."/>
            <person name="Veith B."/>
            <person name="Brueggemann H."/>
            <person name="Liesegang H."/>
            <person name="Strittmatter A."/>
            <person name="Miethke M."/>
            <person name="Buckel W."/>
            <person name="Hinderberger J."/>
            <person name="Li F."/>
            <person name="Hagemeier C."/>
            <person name="Thauer R.K."/>
            <person name="Gottschalk G."/>
        </authorList>
    </citation>
    <scope>NUCLEOTIDE SEQUENCE [LARGE SCALE GENOMIC DNA]</scope>
    <source>
        <strain>ATCC 8527 / DSM 555 / NBRC 12016 / NCIMB 10680 / K1</strain>
    </source>
</reference>
<comment type="function">
    <text evidence="1">One of the primary rRNA binding proteins, it binds specifically to the 5'-end of 16S ribosomal RNA.</text>
</comment>
<comment type="subunit">
    <text evidence="1">Part of the 30S ribosomal subunit.</text>
</comment>
<comment type="similarity">
    <text evidence="1">Belongs to the universal ribosomal protein uS17 family.</text>
</comment>
<sequence length="84" mass="9882">MERGYRKTRIGTVTSDKMDKTIVVAVENRVRHPLYGKIIKKTSKFKAHDENNEAKNNDKVLIMETRPLSKDKRWRLVEIVEKAK</sequence>
<protein>
    <recommendedName>
        <fullName evidence="1">Small ribosomal subunit protein uS17</fullName>
    </recommendedName>
    <alternativeName>
        <fullName evidence="2">30S ribosomal protein S17</fullName>
    </alternativeName>
</protein>
<gene>
    <name evidence="1" type="primary">rpsQ</name>
    <name type="ordered locus">CKL_0233</name>
</gene>
<feature type="chain" id="PRO_1000086835" description="Small ribosomal subunit protein uS17">
    <location>
        <begin position="1"/>
        <end position="84"/>
    </location>
</feature>
<proteinExistence type="inferred from homology"/>
<dbReference type="EMBL" id="CP000673">
    <property type="protein sequence ID" value="EDK32287.1"/>
    <property type="molecule type" value="Genomic_DNA"/>
</dbReference>
<dbReference type="RefSeq" id="WP_011988812.1">
    <property type="nucleotide sequence ID" value="NC_009706.1"/>
</dbReference>
<dbReference type="SMR" id="A5N4Q6"/>
<dbReference type="STRING" id="431943.CKL_0233"/>
<dbReference type="KEGG" id="ckl:CKL_0233"/>
<dbReference type="eggNOG" id="COG0186">
    <property type="taxonomic scope" value="Bacteria"/>
</dbReference>
<dbReference type="HOGENOM" id="CLU_073626_1_0_9"/>
<dbReference type="Proteomes" id="UP000002411">
    <property type="component" value="Chromosome"/>
</dbReference>
<dbReference type="GO" id="GO:0022627">
    <property type="term" value="C:cytosolic small ribosomal subunit"/>
    <property type="evidence" value="ECO:0007669"/>
    <property type="project" value="TreeGrafter"/>
</dbReference>
<dbReference type="GO" id="GO:0019843">
    <property type="term" value="F:rRNA binding"/>
    <property type="evidence" value="ECO:0007669"/>
    <property type="project" value="UniProtKB-UniRule"/>
</dbReference>
<dbReference type="GO" id="GO:0003735">
    <property type="term" value="F:structural constituent of ribosome"/>
    <property type="evidence" value="ECO:0007669"/>
    <property type="project" value="InterPro"/>
</dbReference>
<dbReference type="GO" id="GO:0006412">
    <property type="term" value="P:translation"/>
    <property type="evidence" value="ECO:0007669"/>
    <property type="project" value="UniProtKB-UniRule"/>
</dbReference>
<dbReference type="CDD" id="cd00364">
    <property type="entry name" value="Ribosomal_uS17"/>
    <property type="match status" value="1"/>
</dbReference>
<dbReference type="FunFam" id="2.40.50.140:FF:000123">
    <property type="entry name" value="30S ribosomal protein S17"/>
    <property type="match status" value="1"/>
</dbReference>
<dbReference type="Gene3D" id="2.40.50.140">
    <property type="entry name" value="Nucleic acid-binding proteins"/>
    <property type="match status" value="1"/>
</dbReference>
<dbReference type="HAMAP" id="MF_01345_B">
    <property type="entry name" value="Ribosomal_uS17_B"/>
    <property type="match status" value="1"/>
</dbReference>
<dbReference type="InterPro" id="IPR012340">
    <property type="entry name" value="NA-bd_OB-fold"/>
</dbReference>
<dbReference type="InterPro" id="IPR000266">
    <property type="entry name" value="Ribosomal_uS17"/>
</dbReference>
<dbReference type="InterPro" id="IPR019984">
    <property type="entry name" value="Ribosomal_uS17_bact/chlr"/>
</dbReference>
<dbReference type="NCBIfam" id="NF004123">
    <property type="entry name" value="PRK05610.1"/>
    <property type="match status" value="1"/>
</dbReference>
<dbReference type="NCBIfam" id="TIGR03635">
    <property type="entry name" value="uS17_bact"/>
    <property type="match status" value="1"/>
</dbReference>
<dbReference type="PANTHER" id="PTHR10744">
    <property type="entry name" value="40S RIBOSOMAL PROTEIN S11 FAMILY MEMBER"/>
    <property type="match status" value="1"/>
</dbReference>
<dbReference type="PANTHER" id="PTHR10744:SF1">
    <property type="entry name" value="SMALL RIBOSOMAL SUBUNIT PROTEIN US17M"/>
    <property type="match status" value="1"/>
</dbReference>
<dbReference type="Pfam" id="PF00366">
    <property type="entry name" value="Ribosomal_S17"/>
    <property type="match status" value="1"/>
</dbReference>
<dbReference type="PRINTS" id="PR00973">
    <property type="entry name" value="RIBOSOMALS17"/>
</dbReference>
<dbReference type="SUPFAM" id="SSF50249">
    <property type="entry name" value="Nucleic acid-binding proteins"/>
    <property type="match status" value="1"/>
</dbReference>
<keyword id="KW-1185">Reference proteome</keyword>
<keyword id="KW-0687">Ribonucleoprotein</keyword>
<keyword id="KW-0689">Ribosomal protein</keyword>
<keyword id="KW-0694">RNA-binding</keyword>
<keyword id="KW-0699">rRNA-binding</keyword>
<evidence type="ECO:0000255" key="1">
    <source>
        <dbReference type="HAMAP-Rule" id="MF_01345"/>
    </source>
</evidence>
<evidence type="ECO:0000305" key="2"/>
<organism>
    <name type="scientific">Clostridium kluyveri (strain ATCC 8527 / DSM 555 / NBRC 12016 / NCIMB 10680 / K1)</name>
    <dbReference type="NCBI Taxonomy" id="431943"/>
    <lineage>
        <taxon>Bacteria</taxon>
        <taxon>Bacillati</taxon>
        <taxon>Bacillota</taxon>
        <taxon>Clostridia</taxon>
        <taxon>Eubacteriales</taxon>
        <taxon>Clostridiaceae</taxon>
        <taxon>Clostridium</taxon>
    </lineage>
</organism>
<accession>A5N4Q6</accession>